<evidence type="ECO:0000255" key="1">
    <source>
        <dbReference type="HAMAP-Rule" id="MF_00291"/>
    </source>
</evidence>
<evidence type="ECO:0000256" key="2">
    <source>
        <dbReference type="SAM" id="MobiDB-lite"/>
    </source>
</evidence>
<evidence type="ECO:0000305" key="3"/>
<reference key="1">
    <citation type="journal article" date="2007" name="J. Bacteriol.">
        <title>Genome sequence and analysis of the soil cellulolytic actinomycete Thermobifida fusca YX.</title>
        <authorList>
            <person name="Lykidis A."/>
            <person name="Mavromatis K."/>
            <person name="Ivanova N."/>
            <person name="Anderson I."/>
            <person name="Land M."/>
            <person name="DiBartolo G."/>
            <person name="Martinez M."/>
            <person name="Lapidus A."/>
            <person name="Lucas S."/>
            <person name="Copeland A."/>
            <person name="Richardson P."/>
            <person name="Wilson D.B."/>
            <person name="Kyrpides N."/>
        </authorList>
    </citation>
    <scope>NUCLEOTIDE SEQUENCE [LARGE SCALE GENOMIC DNA]</scope>
    <source>
        <strain>YX</strain>
    </source>
</reference>
<organism>
    <name type="scientific">Thermobifida fusca (strain YX)</name>
    <dbReference type="NCBI Taxonomy" id="269800"/>
    <lineage>
        <taxon>Bacteria</taxon>
        <taxon>Bacillati</taxon>
        <taxon>Actinomycetota</taxon>
        <taxon>Actinomycetes</taxon>
        <taxon>Streptosporangiales</taxon>
        <taxon>Nocardiopsidaceae</taxon>
        <taxon>Thermobifida</taxon>
    </lineage>
</organism>
<keyword id="KW-0687">Ribonucleoprotein</keyword>
<keyword id="KW-0689">Ribosomal protein</keyword>
<comment type="similarity">
    <text evidence="1">Belongs to the universal ribosomal protein uS2 family.</text>
</comment>
<name>RS2_THEFY</name>
<dbReference type="EMBL" id="CP000088">
    <property type="protein sequence ID" value="AAZ54714.1"/>
    <property type="molecule type" value="Genomic_DNA"/>
</dbReference>
<dbReference type="RefSeq" id="WP_011291123.1">
    <property type="nucleotide sequence ID" value="NC_007333.1"/>
</dbReference>
<dbReference type="SMR" id="Q47S53"/>
<dbReference type="STRING" id="269800.Tfu_0676"/>
<dbReference type="KEGG" id="tfu:Tfu_0676"/>
<dbReference type="eggNOG" id="COG0052">
    <property type="taxonomic scope" value="Bacteria"/>
</dbReference>
<dbReference type="HOGENOM" id="CLU_040318_2_3_11"/>
<dbReference type="OrthoDB" id="9808036at2"/>
<dbReference type="GO" id="GO:0022627">
    <property type="term" value="C:cytosolic small ribosomal subunit"/>
    <property type="evidence" value="ECO:0007669"/>
    <property type="project" value="TreeGrafter"/>
</dbReference>
<dbReference type="GO" id="GO:0003735">
    <property type="term" value="F:structural constituent of ribosome"/>
    <property type="evidence" value="ECO:0007669"/>
    <property type="project" value="InterPro"/>
</dbReference>
<dbReference type="GO" id="GO:0006412">
    <property type="term" value="P:translation"/>
    <property type="evidence" value="ECO:0007669"/>
    <property type="project" value="UniProtKB-UniRule"/>
</dbReference>
<dbReference type="CDD" id="cd01425">
    <property type="entry name" value="RPS2"/>
    <property type="match status" value="1"/>
</dbReference>
<dbReference type="FunFam" id="1.10.287.610:FF:000001">
    <property type="entry name" value="30S ribosomal protein S2"/>
    <property type="match status" value="1"/>
</dbReference>
<dbReference type="Gene3D" id="3.40.50.10490">
    <property type="entry name" value="Glucose-6-phosphate isomerase like protein, domain 1"/>
    <property type="match status" value="1"/>
</dbReference>
<dbReference type="Gene3D" id="1.10.287.610">
    <property type="entry name" value="Helix hairpin bin"/>
    <property type="match status" value="1"/>
</dbReference>
<dbReference type="HAMAP" id="MF_00291_B">
    <property type="entry name" value="Ribosomal_uS2_B"/>
    <property type="match status" value="1"/>
</dbReference>
<dbReference type="InterPro" id="IPR001865">
    <property type="entry name" value="Ribosomal_uS2"/>
</dbReference>
<dbReference type="InterPro" id="IPR005706">
    <property type="entry name" value="Ribosomal_uS2_bac/mit/plastid"/>
</dbReference>
<dbReference type="InterPro" id="IPR018130">
    <property type="entry name" value="Ribosomal_uS2_CS"/>
</dbReference>
<dbReference type="InterPro" id="IPR023591">
    <property type="entry name" value="Ribosomal_uS2_flav_dom_sf"/>
</dbReference>
<dbReference type="NCBIfam" id="TIGR01011">
    <property type="entry name" value="rpsB_bact"/>
    <property type="match status" value="1"/>
</dbReference>
<dbReference type="PANTHER" id="PTHR12534">
    <property type="entry name" value="30S RIBOSOMAL PROTEIN S2 PROKARYOTIC AND ORGANELLAR"/>
    <property type="match status" value="1"/>
</dbReference>
<dbReference type="PANTHER" id="PTHR12534:SF0">
    <property type="entry name" value="SMALL RIBOSOMAL SUBUNIT PROTEIN US2M"/>
    <property type="match status" value="1"/>
</dbReference>
<dbReference type="Pfam" id="PF00318">
    <property type="entry name" value="Ribosomal_S2"/>
    <property type="match status" value="1"/>
</dbReference>
<dbReference type="PRINTS" id="PR00395">
    <property type="entry name" value="RIBOSOMALS2"/>
</dbReference>
<dbReference type="SUPFAM" id="SSF52313">
    <property type="entry name" value="Ribosomal protein S2"/>
    <property type="match status" value="1"/>
</dbReference>
<dbReference type="PROSITE" id="PS00962">
    <property type="entry name" value="RIBOSOMAL_S2_1"/>
    <property type="match status" value="1"/>
</dbReference>
<gene>
    <name evidence="1" type="primary">rpsB</name>
    <name type="ordered locus">Tfu_0676</name>
</gene>
<proteinExistence type="inferred from homology"/>
<accession>Q47S53</accession>
<sequence length="292" mass="32468">MATVVTIRQLLESGVHFGHQTRRWNPKMKRFIFTERNGIYIIDLQKSLSYIDRAYEFVKETVAHGGTILFVGTKKQAQEAIYEQARRVGMPYVNQRWLGGMLTNFSTVHKRLQRLKELEEIDFDDVASSGLTKKELLGLRREKEKLERTLGGIRDMNRVPSAVWIVDTKKEHIAISEARKLNIPVVAILDTNCDPDEVDYPIPGNDDAIRSVSLLTRVVADAVAEGLMIRSGGAPGSEKGAGEPLAEWERELLEGKTEAAGEEATPAAEAPAKEEKAQAPEEKKEAGSGEEA</sequence>
<feature type="chain" id="PRO_0000352046" description="Small ribosomal subunit protein uS2">
    <location>
        <begin position="1"/>
        <end position="292"/>
    </location>
</feature>
<feature type="region of interest" description="Disordered" evidence="2">
    <location>
        <begin position="230"/>
        <end position="292"/>
    </location>
</feature>
<feature type="compositionally biased region" description="Basic and acidic residues" evidence="2">
    <location>
        <begin position="247"/>
        <end position="259"/>
    </location>
</feature>
<feature type="compositionally biased region" description="Basic and acidic residues" evidence="2">
    <location>
        <begin position="271"/>
        <end position="292"/>
    </location>
</feature>
<protein>
    <recommendedName>
        <fullName evidence="1">Small ribosomal subunit protein uS2</fullName>
    </recommendedName>
    <alternativeName>
        <fullName evidence="3">30S ribosomal protein S2</fullName>
    </alternativeName>
</protein>